<dbReference type="EC" id="2.7.11.1" evidence="1"/>
<dbReference type="EMBL" id="CR380958">
    <property type="protein sequence ID" value="CAG62006.1"/>
    <property type="molecule type" value="Genomic_DNA"/>
</dbReference>
<dbReference type="RefSeq" id="XP_449036.1">
    <property type="nucleotide sequence ID" value="XM_449036.1"/>
</dbReference>
<dbReference type="SMR" id="Q6FL58"/>
<dbReference type="FunCoup" id="Q6FL58">
    <property type="interactions" value="143"/>
</dbReference>
<dbReference type="STRING" id="284593.Q6FL58"/>
<dbReference type="KEGG" id="cgr:2890744"/>
<dbReference type="eggNOG" id="KOG0595">
    <property type="taxonomic scope" value="Eukaryota"/>
</dbReference>
<dbReference type="HOGENOM" id="CLU_006447_0_0_1"/>
<dbReference type="InParanoid" id="Q6FL58"/>
<dbReference type="OMA" id="INNVVQW"/>
<dbReference type="Proteomes" id="UP000002428">
    <property type="component" value="Chromosome L"/>
</dbReference>
<dbReference type="GO" id="GO:0005776">
    <property type="term" value="C:autophagosome"/>
    <property type="evidence" value="ECO:0007669"/>
    <property type="project" value="TreeGrafter"/>
</dbReference>
<dbReference type="GO" id="GO:0005829">
    <property type="term" value="C:cytosol"/>
    <property type="evidence" value="ECO:0007669"/>
    <property type="project" value="TreeGrafter"/>
</dbReference>
<dbReference type="GO" id="GO:0034045">
    <property type="term" value="C:phagophore assembly site membrane"/>
    <property type="evidence" value="ECO:0007669"/>
    <property type="project" value="UniProtKB-SubCell"/>
</dbReference>
<dbReference type="GO" id="GO:0005524">
    <property type="term" value="F:ATP binding"/>
    <property type="evidence" value="ECO:0007669"/>
    <property type="project" value="UniProtKB-KW"/>
</dbReference>
<dbReference type="GO" id="GO:0106310">
    <property type="term" value="F:protein serine kinase activity"/>
    <property type="evidence" value="ECO:0007669"/>
    <property type="project" value="RHEA"/>
</dbReference>
<dbReference type="GO" id="GO:0004674">
    <property type="term" value="F:protein serine/threonine kinase activity"/>
    <property type="evidence" value="ECO:0007669"/>
    <property type="project" value="UniProtKB-KW"/>
</dbReference>
<dbReference type="GO" id="GO:0000045">
    <property type="term" value="P:autophagosome assembly"/>
    <property type="evidence" value="ECO:0007669"/>
    <property type="project" value="TreeGrafter"/>
</dbReference>
<dbReference type="GO" id="GO:0000422">
    <property type="term" value="P:autophagy of mitochondrion"/>
    <property type="evidence" value="ECO:0007669"/>
    <property type="project" value="TreeGrafter"/>
</dbReference>
<dbReference type="GO" id="GO:0034727">
    <property type="term" value="P:piecemeal microautophagy of the nucleus"/>
    <property type="evidence" value="ECO:0007669"/>
    <property type="project" value="TreeGrafter"/>
</dbReference>
<dbReference type="GO" id="GO:0015031">
    <property type="term" value="P:protein transport"/>
    <property type="evidence" value="ECO:0007669"/>
    <property type="project" value="UniProtKB-KW"/>
</dbReference>
<dbReference type="GO" id="GO:0010506">
    <property type="term" value="P:regulation of autophagy"/>
    <property type="evidence" value="ECO:0007669"/>
    <property type="project" value="InterPro"/>
</dbReference>
<dbReference type="GO" id="GO:0042594">
    <property type="term" value="P:response to starvation"/>
    <property type="evidence" value="ECO:0007669"/>
    <property type="project" value="TreeGrafter"/>
</dbReference>
<dbReference type="GO" id="GO:0061709">
    <property type="term" value="P:reticulophagy"/>
    <property type="evidence" value="ECO:0007669"/>
    <property type="project" value="TreeGrafter"/>
</dbReference>
<dbReference type="CDD" id="cd14009">
    <property type="entry name" value="STKc_ATG1_ULK_like"/>
    <property type="match status" value="1"/>
</dbReference>
<dbReference type="FunFam" id="1.10.510.10:FF:000817">
    <property type="entry name" value="Serine/threonine-protein kinase ATG1"/>
    <property type="match status" value="1"/>
</dbReference>
<dbReference type="Gene3D" id="3.30.200.20">
    <property type="entry name" value="Phosphorylase Kinase, domain 1"/>
    <property type="match status" value="1"/>
</dbReference>
<dbReference type="Gene3D" id="1.10.510.10">
    <property type="entry name" value="Transferase(Phosphotransferase) domain 1"/>
    <property type="match status" value="1"/>
</dbReference>
<dbReference type="InterPro" id="IPR045269">
    <property type="entry name" value="Atg1-like"/>
</dbReference>
<dbReference type="InterPro" id="IPR048941">
    <property type="entry name" value="ATG1-like_MIT2"/>
</dbReference>
<dbReference type="InterPro" id="IPR022708">
    <property type="entry name" value="Atg1-like_tMIT"/>
</dbReference>
<dbReference type="InterPro" id="IPR011009">
    <property type="entry name" value="Kinase-like_dom_sf"/>
</dbReference>
<dbReference type="InterPro" id="IPR000719">
    <property type="entry name" value="Prot_kinase_dom"/>
</dbReference>
<dbReference type="InterPro" id="IPR017441">
    <property type="entry name" value="Protein_kinase_ATP_BS"/>
</dbReference>
<dbReference type="InterPro" id="IPR008271">
    <property type="entry name" value="Ser/Thr_kinase_AS"/>
</dbReference>
<dbReference type="PANTHER" id="PTHR24348:SF22">
    <property type="entry name" value="NON-SPECIFIC SERINE_THREONINE PROTEIN KINASE"/>
    <property type="match status" value="1"/>
</dbReference>
<dbReference type="PANTHER" id="PTHR24348">
    <property type="entry name" value="SERINE/THREONINE-PROTEIN KINASE UNC-51-RELATED"/>
    <property type="match status" value="1"/>
</dbReference>
<dbReference type="Pfam" id="PF12063">
    <property type="entry name" value="ATG1-like_MIT1"/>
    <property type="match status" value="1"/>
</dbReference>
<dbReference type="Pfam" id="PF21127">
    <property type="entry name" value="ATG1-like_MIT2"/>
    <property type="match status" value="1"/>
</dbReference>
<dbReference type="Pfam" id="PF00069">
    <property type="entry name" value="Pkinase"/>
    <property type="match status" value="1"/>
</dbReference>
<dbReference type="SMART" id="SM00220">
    <property type="entry name" value="S_TKc"/>
    <property type="match status" value="1"/>
</dbReference>
<dbReference type="SUPFAM" id="SSF56112">
    <property type="entry name" value="Protein kinase-like (PK-like)"/>
    <property type="match status" value="1"/>
</dbReference>
<dbReference type="PROSITE" id="PS00107">
    <property type="entry name" value="PROTEIN_KINASE_ATP"/>
    <property type="match status" value="1"/>
</dbReference>
<dbReference type="PROSITE" id="PS50011">
    <property type="entry name" value="PROTEIN_KINASE_DOM"/>
    <property type="match status" value="1"/>
</dbReference>
<dbReference type="PROSITE" id="PS00108">
    <property type="entry name" value="PROTEIN_KINASE_ST"/>
    <property type="match status" value="1"/>
</dbReference>
<proteinExistence type="inferred from homology"/>
<gene>
    <name evidence="7" type="primary">ATG1</name>
    <name evidence="6" type="ordered locus">CAGL0L06006g</name>
</gene>
<organism>
    <name type="scientific">Candida glabrata (strain ATCC 2001 / BCRC 20586 / JCM 3761 / NBRC 0622 / NRRL Y-65 / CBS 138)</name>
    <name type="common">Yeast</name>
    <name type="synonym">Nakaseomyces glabratus</name>
    <dbReference type="NCBI Taxonomy" id="284593"/>
    <lineage>
        <taxon>Eukaryota</taxon>
        <taxon>Fungi</taxon>
        <taxon>Dikarya</taxon>
        <taxon>Ascomycota</taxon>
        <taxon>Saccharomycotina</taxon>
        <taxon>Saccharomycetes</taxon>
        <taxon>Saccharomycetales</taxon>
        <taxon>Saccharomycetaceae</taxon>
        <taxon>Nakaseomyces</taxon>
    </lineage>
</organism>
<protein>
    <recommendedName>
        <fullName evidence="7">Serine/threonine-protein kinase ATG1</fullName>
        <ecNumber evidence="1">2.7.11.1</ecNumber>
    </recommendedName>
    <alternativeName>
        <fullName evidence="7">Autophagy-related protein 1</fullName>
    </alternativeName>
</protein>
<accession>Q6FL58</accession>
<comment type="function">
    <text evidence="1 5">Serine/threonine protein kinase involved in the cytoplasm to vacuole transport (Cvt) and found to be essential in autophagy, where it is required for the formation of autophagosomes (PubMed:30761093). Involved in the clearance of protein aggregates which cannot be efficiently cleared by the proteasome (By similarity). Required for selective autophagic degradation of the nucleus (nucleophagy) as well as for mitophagy which contributes to regulate mitochondrial quantity and quality by eliminating the mitochondria to a basal level to fulfill cellular energy requirements and preventing excess ROS production (By similarity). Also involved in endoplasmic reticulum-specific autophagic process, in selective removal of ER-associated degradation (ERAD) substrates (By similarity). Plays a key role in ATG9 and ATG23 cycling through the pre-autophagosomal structure and is necessary to promote ATG18 binding to ATG9 through phosphorylation of ATG9 (By similarity). Catalyzes phosphorylation of ATG4, decreasing the interaction between ATG4 and ATG8 and impairing deconjugation of PE-conjugated forms of ATG8 (By similarity). Contributes to virulence by conferring resistance to unstable nutrient environments and immune defense of hosts (PubMed:30761093).</text>
</comment>
<comment type="catalytic activity">
    <reaction evidence="1">
        <text>L-seryl-[protein] + ATP = O-phospho-L-seryl-[protein] + ADP + H(+)</text>
        <dbReference type="Rhea" id="RHEA:17989"/>
        <dbReference type="Rhea" id="RHEA-COMP:9863"/>
        <dbReference type="Rhea" id="RHEA-COMP:11604"/>
        <dbReference type="ChEBI" id="CHEBI:15378"/>
        <dbReference type="ChEBI" id="CHEBI:29999"/>
        <dbReference type="ChEBI" id="CHEBI:30616"/>
        <dbReference type="ChEBI" id="CHEBI:83421"/>
        <dbReference type="ChEBI" id="CHEBI:456216"/>
        <dbReference type="EC" id="2.7.11.1"/>
    </reaction>
    <physiologicalReaction direction="left-to-right" evidence="1">
        <dbReference type="Rhea" id="RHEA:17990"/>
    </physiologicalReaction>
</comment>
<comment type="catalytic activity">
    <reaction evidence="1">
        <text>L-threonyl-[protein] + ATP = O-phospho-L-threonyl-[protein] + ADP + H(+)</text>
        <dbReference type="Rhea" id="RHEA:46608"/>
        <dbReference type="Rhea" id="RHEA-COMP:11060"/>
        <dbReference type="Rhea" id="RHEA-COMP:11605"/>
        <dbReference type="ChEBI" id="CHEBI:15378"/>
        <dbReference type="ChEBI" id="CHEBI:30013"/>
        <dbReference type="ChEBI" id="CHEBI:30616"/>
        <dbReference type="ChEBI" id="CHEBI:61977"/>
        <dbReference type="ChEBI" id="CHEBI:456216"/>
        <dbReference type="EC" id="2.7.11.1"/>
    </reaction>
    <physiologicalReaction direction="left-to-right" evidence="1">
        <dbReference type="Rhea" id="RHEA:46609"/>
    </physiologicalReaction>
</comment>
<comment type="subunit">
    <text evidence="1">Homodimer (By similarity). Forms a ternary complex with ATG13 and ATG17 (By similarity).</text>
</comment>
<comment type="subcellular location">
    <subcellularLocation>
        <location evidence="1">Cytoplasm</location>
    </subcellularLocation>
    <subcellularLocation>
        <location evidence="1">Preautophagosomal structure membrane</location>
        <topology evidence="1">Peripheral membrane protein</topology>
    </subcellularLocation>
</comment>
<comment type="disruption phenotype">
    <text evidence="5">Leads to sensitivity to nitrogen starvation and H(2)O(2) and impairs autophagy (PubMed:30761093). Shows high intracellular ROS levels (PubMed:30761093). Also shows higher mortality from phagocytosis by macrophages upon infecting mouse peritoneal macrophages (PubMed:30761093). Finally, leads to significantly decreased colony forming units (CFUs) in two mouse models of disseminated candidiasis and intra-abdominal candidiasis (PubMed:30761093).</text>
</comment>
<comment type="similarity">
    <text evidence="2">Belongs to the protein kinase superfamily. Ser/Thr protein kinase family. APG1/unc-51/ULK1 subfamily.</text>
</comment>
<keyword id="KW-0067">ATP-binding</keyword>
<keyword id="KW-0072">Autophagy</keyword>
<keyword id="KW-0963">Cytoplasm</keyword>
<keyword id="KW-0418">Kinase</keyword>
<keyword id="KW-0472">Membrane</keyword>
<keyword id="KW-0547">Nucleotide-binding</keyword>
<keyword id="KW-0653">Protein transport</keyword>
<keyword id="KW-1185">Reference proteome</keyword>
<keyword id="KW-0723">Serine/threonine-protein kinase</keyword>
<keyword id="KW-0808">Transferase</keyword>
<keyword id="KW-0813">Transport</keyword>
<evidence type="ECO:0000250" key="1">
    <source>
        <dbReference type="UniProtKB" id="P53104"/>
    </source>
</evidence>
<evidence type="ECO:0000255" key="2">
    <source>
        <dbReference type="PROSITE-ProRule" id="PRU00159"/>
    </source>
</evidence>
<evidence type="ECO:0000255" key="3">
    <source>
        <dbReference type="PROSITE-ProRule" id="PRU10027"/>
    </source>
</evidence>
<evidence type="ECO:0000256" key="4">
    <source>
        <dbReference type="SAM" id="MobiDB-lite"/>
    </source>
</evidence>
<evidence type="ECO:0000269" key="5">
    <source>
    </source>
</evidence>
<evidence type="ECO:0000303" key="6">
    <source>
    </source>
</evidence>
<evidence type="ECO:0000303" key="7">
    <source>
    </source>
</evidence>
<name>ATG1_CANGA</name>
<sequence>MDRFRIQDGKYVVEKEIGKGSFATVYRGHVTTDPKSHIAVKAVARSKLKNKKLLENLEIEIAILKKIKHPHIVGLIDCERTTTDFYLVMDYCALGDLTFLIKKRKELENNHPLLQTVFNKYPPPSKEHNGLNRAFVVCYLQQLASALKFLRSKNLVHRDIKPQNLLLATPLTNYRDSKTFHELGYVGIYNLPILKIADFGFARFLPSTSLAETLCGSPLYMAPEILNYQKYNAKADLWSVGTVLFEMCCGVPPFTASNHLELFKKIKRAHDEINFPEVCEVEDGLKELICSLLTFDPAKRIGFEEFFNNKIVTEDLSHYEVDENTELESKSKDLQESNMFVSEFLIKKRNQKGVSSRKDTEFIPKSKQEPMLDQAYKDETEMETGVKYGVNIAPEVYQNEMIDPEKLAAKLIAAKQLGSDEKLTNKNISHLLSSNSSRVNKLDKSNLSGKSDSSLDRDYVVVEKKAVEVNSLADDLAQANVGNNDEAVKDQNIKTLEQPHIQVHQPHNDIQNLQRAPSTTSGGTSSRRASLVERRLSISSLNPSNALSRALGLASTRIFGSSAQTNKNQTSNSTSPNYTQPLLNSQIFYDLTENLILHTETLNQPALINVDHAKGINEVIRILESLSAKAFVVYSYAEVKYAQIIPLPQAVIRASPALQFEKRLSDDSNPVIDEDSDEELDVQKNLSNTLLSETVNTRYRLRNDSSRNSYNKRNSFNKERFSFSSQGSNNSKRTNSYSSTLLPAEIISISKEAIVLYMKALQILAQSMKITSKWWYSCQEKICSLRLNILVQWIREKFNECLDKTDFLRMKLEEYENSKPGTHNQSPKSKISNDSNEDNVAEKVYLEKLLYDRALEISKYAANLELQGQNLHICELAYATSLWMLTISLENSPYTDQGEDEYDEFLKDTNDVLDSEDKIIIGKYIKSISHRLKMLRQKMAKY</sequence>
<feature type="chain" id="PRO_0000085642" description="Serine/threonine-protein kinase ATG1">
    <location>
        <begin position="1"/>
        <end position="942"/>
    </location>
</feature>
<feature type="domain" description="Protein kinase" evidence="2">
    <location>
        <begin position="11"/>
        <end position="312"/>
    </location>
</feature>
<feature type="region of interest" description="Disordered" evidence="4">
    <location>
        <begin position="435"/>
        <end position="454"/>
    </location>
</feature>
<feature type="region of interest" description="Disordered" evidence="4">
    <location>
        <begin position="505"/>
        <end position="529"/>
    </location>
</feature>
<feature type="region of interest" description="Disordered" evidence="4">
    <location>
        <begin position="817"/>
        <end position="836"/>
    </location>
</feature>
<feature type="compositionally biased region" description="Polar residues" evidence="4">
    <location>
        <begin position="435"/>
        <end position="452"/>
    </location>
</feature>
<feature type="compositionally biased region" description="Low complexity" evidence="4">
    <location>
        <begin position="515"/>
        <end position="529"/>
    </location>
</feature>
<feature type="compositionally biased region" description="Polar residues" evidence="4">
    <location>
        <begin position="819"/>
        <end position="834"/>
    </location>
</feature>
<feature type="active site" description="Proton acceptor" evidence="2 3">
    <location>
        <position position="159"/>
    </location>
</feature>
<feature type="binding site" evidence="2">
    <location>
        <begin position="17"/>
        <end position="25"/>
    </location>
    <ligand>
        <name>ATP</name>
        <dbReference type="ChEBI" id="CHEBI:30616"/>
    </ligand>
</feature>
<feature type="binding site" evidence="2">
    <location>
        <position position="41"/>
    </location>
    <ligand>
        <name>ATP</name>
        <dbReference type="ChEBI" id="CHEBI:30616"/>
    </ligand>
</feature>
<reference key="1">
    <citation type="journal article" date="2004" name="Nature">
        <title>Genome evolution in yeasts.</title>
        <authorList>
            <person name="Dujon B."/>
            <person name="Sherman D."/>
            <person name="Fischer G."/>
            <person name="Durrens P."/>
            <person name="Casaregola S."/>
            <person name="Lafontaine I."/>
            <person name="de Montigny J."/>
            <person name="Marck C."/>
            <person name="Neuveglise C."/>
            <person name="Talla E."/>
            <person name="Goffard N."/>
            <person name="Frangeul L."/>
            <person name="Aigle M."/>
            <person name="Anthouard V."/>
            <person name="Babour A."/>
            <person name="Barbe V."/>
            <person name="Barnay S."/>
            <person name="Blanchin S."/>
            <person name="Beckerich J.-M."/>
            <person name="Beyne E."/>
            <person name="Bleykasten C."/>
            <person name="Boisrame A."/>
            <person name="Boyer J."/>
            <person name="Cattolico L."/>
            <person name="Confanioleri F."/>
            <person name="de Daruvar A."/>
            <person name="Despons L."/>
            <person name="Fabre E."/>
            <person name="Fairhead C."/>
            <person name="Ferry-Dumazet H."/>
            <person name="Groppi A."/>
            <person name="Hantraye F."/>
            <person name="Hennequin C."/>
            <person name="Jauniaux N."/>
            <person name="Joyet P."/>
            <person name="Kachouri R."/>
            <person name="Kerrest A."/>
            <person name="Koszul R."/>
            <person name="Lemaire M."/>
            <person name="Lesur I."/>
            <person name="Ma L."/>
            <person name="Muller H."/>
            <person name="Nicaud J.-M."/>
            <person name="Nikolski M."/>
            <person name="Oztas S."/>
            <person name="Ozier-Kalogeropoulos O."/>
            <person name="Pellenz S."/>
            <person name="Potier S."/>
            <person name="Richard G.-F."/>
            <person name="Straub M.-L."/>
            <person name="Suleau A."/>
            <person name="Swennen D."/>
            <person name="Tekaia F."/>
            <person name="Wesolowski-Louvel M."/>
            <person name="Westhof E."/>
            <person name="Wirth B."/>
            <person name="Zeniou-Meyer M."/>
            <person name="Zivanovic Y."/>
            <person name="Bolotin-Fukuhara M."/>
            <person name="Thierry A."/>
            <person name="Bouchier C."/>
            <person name="Caudron B."/>
            <person name="Scarpelli C."/>
            <person name="Gaillardin C."/>
            <person name="Weissenbach J."/>
            <person name="Wincker P."/>
            <person name="Souciet J.-L."/>
        </authorList>
    </citation>
    <scope>NUCLEOTIDE SEQUENCE [LARGE SCALE GENOMIC DNA]</scope>
    <source>
        <strain>ATCC 2001 / BCRC 20586 / JCM 3761 / NBRC 0622 / NRRL Y-65 / CBS 138</strain>
    </source>
</reference>
<reference key="2">
    <citation type="journal article" date="2019" name="Front. Microbiol.">
        <title>Autophagy-inducing factor Atg1 is required for virulence in the pathogenic fungus Candida glabrata.</title>
        <authorList>
            <person name="Shimamura S."/>
            <person name="Miyazaki T."/>
            <person name="Tashiro M."/>
            <person name="Takazono T."/>
            <person name="Saijo T."/>
            <person name="Yamamoto K."/>
            <person name="Imamura Y."/>
            <person name="Izumikawa K."/>
            <person name="Yanagihara K."/>
            <person name="Kohno S."/>
            <person name="Mukae H."/>
        </authorList>
    </citation>
    <scope>FUNCTION</scope>
    <scope>DISRUPTION PHENOTYPE</scope>
</reference>